<evidence type="ECO:0000250" key="1"/>
<evidence type="ECO:0000250" key="2">
    <source>
        <dbReference type="UniProtKB" id="P00441"/>
    </source>
</evidence>
<evidence type="ECO:0000250" key="3">
    <source>
        <dbReference type="UniProtKB" id="P00442"/>
    </source>
</evidence>
<evidence type="ECO:0000250" key="4">
    <source>
        <dbReference type="UniProtKB" id="P07632"/>
    </source>
</evidence>
<evidence type="ECO:0000250" key="5">
    <source>
        <dbReference type="UniProtKB" id="P08228"/>
    </source>
</evidence>
<evidence type="ECO:0000305" key="6"/>
<comment type="function">
    <text>Destroys radicals which are normally produced within the cells and which are toxic to biological systems.</text>
</comment>
<comment type="catalytic activity">
    <reaction>
        <text>2 superoxide + 2 H(+) = H2O2 + O2</text>
        <dbReference type="Rhea" id="RHEA:20696"/>
        <dbReference type="ChEBI" id="CHEBI:15378"/>
        <dbReference type="ChEBI" id="CHEBI:15379"/>
        <dbReference type="ChEBI" id="CHEBI:16240"/>
        <dbReference type="ChEBI" id="CHEBI:18421"/>
        <dbReference type="EC" id="1.15.1.1"/>
    </reaction>
</comment>
<comment type="cofactor">
    <cofactor evidence="1">
        <name>Cu cation</name>
        <dbReference type="ChEBI" id="CHEBI:23378"/>
    </cofactor>
    <text evidence="1">Binds 1 copper ion per subunit.</text>
</comment>
<comment type="cofactor">
    <cofactor evidence="1">
        <name>Zn(2+)</name>
        <dbReference type="ChEBI" id="CHEBI:29105"/>
    </cofactor>
    <text evidence="1">Binds 1 zinc ion per subunit.</text>
</comment>
<comment type="subunit">
    <text evidence="2 5">Homodimer; non-disulfide-linked (By similarity). Heterodimer with SOD1. The heterodimer CCS:SOD1 interacts with SLC31A1; this heterotrimer is Cu(1+)-mediated and its maintenance is regulated through SOD1 activation (By similarity).</text>
</comment>
<comment type="subcellular location">
    <subcellularLocation>
        <location evidence="1">Cytoplasm</location>
    </subcellularLocation>
    <subcellularLocation>
        <location evidence="1">Nucleus</location>
    </subcellularLocation>
</comment>
<comment type="PTM">
    <text evidence="1">Palmitoylation helps nuclear targeting and decreases catalytic activity.</text>
</comment>
<comment type="PTM">
    <text evidence="2">Succinylation, adjacent to copper catalytic site, probably inhibits activity. Desuccinylation by SIRT5 enhances activity.</text>
</comment>
<comment type="similarity">
    <text evidence="6">Belongs to the Cu-Zn superoxide dismutase family.</text>
</comment>
<proteinExistence type="evidence at transcript level"/>
<accession>Q8HXQ0</accession>
<gene>
    <name evidence="2" type="primary">SOD1</name>
</gene>
<reference key="1">
    <citation type="journal article" date="2002" name="Gene">
        <title>Structure, molecular evolution, and gene expression of primate superoxide dismutases.</title>
        <authorList>
            <person name="Fukuhara R."/>
            <person name="Tezuka T."/>
            <person name="Kageyama T."/>
        </authorList>
    </citation>
    <scope>NUCLEOTIDE SEQUENCE [MRNA]</scope>
</reference>
<keyword id="KW-0007">Acetylation</keyword>
<keyword id="KW-0049">Antioxidant</keyword>
<keyword id="KW-0186">Copper</keyword>
<keyword id="KW-0963">Cytoplasm</keyword>
<keyword id="KW-1015">Disulfide bond</keyword>
<keyword id="KW-0449">Lipoprotein</keyword>
<keyword id="KW-0479">Metal-binding</keyword>
<keyword id="KW-0539">Nucleus</keyword>
<keyword id="KW-0560">Oxidoreductase</keyword>
<keyword id="KW-0564">Palmitate</keyword>
<keyword id="KW-0597">Phosphoprotein</keyword>
<keyword id="KW-1185">Reference proteome</keyword>
<keyword id="KW-0862">Zinc</keyword>
<organism>
    <name type="scientific">Macaca mulatta</name>
    <name type="common">Rhesus macaque</name>
    <dbReference type="NCBI Taxonomy" id="9544"/>
    <lineage>
        <taxon>Eukaryota</taxon>
        <taxon>Metazoa</taxon>
        <taxon>Chordata</taxon>
        <taxon>Craniata</taxon>
        <taxon>Vertebrata</taxon>
        <taxon>Euteleostomi</taxon>
        <taxon>Mammalia</taxon>
        <taxon>Eutheria</taxon>
        <taxon>Euarchontoglires</taxon>
        <taxon>Primates</taxon>
        <taxon>Haplorrhini</taxon>
        <taxon>Catarrhini</taxon>
        <taxon>Cercopithecidae</taxon>
        <taxon>Cercopithecinae</taxon>
        <taxon>Macaca</taxon>
    </lineage>
</organism>
<name>SODC_MACMU</name>
<protein>
    <recommendedName>
        <fullName evidence="2">Superoxide dismutase [Cu-Zn]</fullName>
        <ecNumber evidence="2">1.15.1.1</ecNumber>
    </recommendedName>
</protein>
<feature type="initiator methionine" description="Removed" evidence="3">
    <location>
        <position position="1"/>
    </location>
</feature>
<feature type="chain" id="PRO_0000164061" description="Superoxide dismutase [Cu-Zn]">
    <location>
        <begin position="2"/>
        <end position="154"/>
    </location>
</feature>
<feature type="binding site" evidence="1">
    <location>
        <position position="47"/>
    </location>
    <ligand>
        <name>Cu cation</name>
        <dbReference type="ChEBI" id="CHEBI:23378"/>
        <note>catalytic</note>
    </ligand>
</feature>
<feature type="binding site" evidence="1">
    <location>
        <position position="49"/>
    </location>
    <ligand>
        <name>Cu cation</name>
        <dbReference type="ChEBI" id="CHEBI:23378"/>
        <note>catalytic</note>
    </ligand>
</feature>
<feature type="binding site" evidence="1">
    <location>
        <position position="64"/>
    </location>
    <ligand>
        <name>Cu cation</name>
        <dbReference type="ChEBI" id="CHEBI:23378"/>
        <note>catalytic</note>
    </ligand>
</feature>
<feature type="binding site" evidence="1">
    <location>
        <position position="64"/>
    </location>
    <ligand>
        <name>Zn(2+)</name>
        <dbReference type="ChEBI" id="CHEBI:29105"/>
        <note>structural</note>
    </ligand>
</feature>
<feature type="binding site" evidence="1">
    <location>
        <position position="72"/>
    </location>
    <ligand>
        <name>Zn(2+)</name>
        <dbReference type="ChEBI" id="CHEBI:29105"/>
        <note>structural</note>
    </ligand>
</feature>
<feature type="binding site" evidence="1">
    <location>
        <position position="81"/>
    </location>
    <ligand>
        <name>Zn(2+)</name>
        <dbReference type="ChEBI" id="CHEBI:29105"/>
        <note>structural</note>
    </ligand>
</feature>
<feature type="binding site" evidence="1">
    <location>
        <position position="84"/>
    </location>
    <ligand>
        <name>Zn(2+)</name>
        <dbReference type="ChEBI" id="CHEBI:29105"/>
        <note>structural</note>
    </ligand>
</feature>
<feature type="binding site" evidence="1">
    <location>
        <position position="121"/>
    </location>
    <ligand>
        <name>Cu cation</name>
        <dbReference type="ChEBI" id="CHEBI:23378"/>
        <note>catalytic</note>
    </ligand>
</feature>
<feature type="modified residue" description="N-acetylalanine" evidence="3">
    <location>
        <position position="2"/>
    </location>
</feature>
<feature type="modified residue" description="N6-succinyllysine" evidence="5">
    <location>
        <position position="4"/>
    </location>
</feature>
<feature type="modified residue" description="N6-succinyllysine" evidence="5">
    <location>
        <position position="10"/>
    </location>
</feature>
<feature type="modified residue" description="N6-succinyllysine" evidence="5">
    <location>
        <position position="92"/>
    </location>
</feature>
<feature type="modified residue" description="Phosphoserine" evidence="2">
    <location>
        <position position="99"/>
    </location>
</feature>
<feature type="modified residue" description="Phosphoserine" evidence="2">
    <location>
        <position position="103"/>
    </location>
</feature>
<feature type="modified residue" description="Phosphoserine" evidence="4">
    <location>
        <position position="106"/>
    </location>
</feature>
<feature type="modified residue" description="Phosphoserine" evidence="5">
    <location>
        <position position="108"/>
    </location>
</feature>
<feature type="modified residue" description="N6-acetyllysine; alternate" evidence="2">
    <location>
        <position position="123"/>
    </location>
</feature>
<feature type="modified residue" description="N6-succinyllysine; alternate" evidence="2">
    <location>
        <position position="123"/>
    </location>
</feature>
<feature type="modified residue" description="N6-acetyllysine; alternate" evidence="5">
    <location>
        <position position="137"/>
    </location>
</feature>
<feature type="modified residue" description="N6-succinyllysine; alternate" evidence="5">
    <location>
        <position position="137"/>
    </location>
</feature>
<feature type="lipid moiety-binding region" description="S-palmitoyl cysteine" evidence="1">
    <location>
        <position position="7"/>
    </location>
</feature>
<feature type="disulfide bond" evidence="1">
    <location>
        <begin position="58"/>
        <end position="147"/>
    </location>
</feature>
<dbReference type="EC" id="1.15.1.1" evidence="2"/>
<dbReference type="EMBL" id="AB087271">
    <property type="protein sequence ID" value="BAC20350.1"/>
    <property type="molecule type" value="mRNA"/>
</dbReference>
<dbReference type="RefSeq" id="NP_001027976.1">
    <property type="nucleotide sequence ID" value="NM_001032804.1"/>
</dbReference>
<dbReference type="SMR" id="Q8HXQ0"/>
<dbReference type="FunCoup" id="Q8HXQ0">
    <property type="interactions" value="1468"/>
</dbReference>
<dbReference type="STRING" id="9544.ENSMMUP00000066269"/>
<dbReference type="PaxDb" id="9544-ENSMMUP00000002283"/>
<dbReference type="GeneID" id="574096"/>
<dbReference type="KEGG" id="mcc:574096"/>
<dbReference type="CTD" id="6647"/>
<dbReference type="eggNOG" id="KOG0441">
    <property type="taxonomic scope" value="Eukaryota"/>
</dbReference>
<dbReference type="HOGENOM" id="CLU_056632_4_1_1"/>
<dbReference type="InParanoid" id="Q8HXQ0"/>
<dbReference type="OrthoDB" id="2015551at2759"/>
<dbReference type="TreeFam" id="TF105131"/>
<dbReference type="Proteomes" id="UP000006718">
    <property type="component" value="Unassembled WGS sequence"/>
</dbReference>
<dbReference type="GO" id="GO:0005737">
    <property type="term" value="C:cytoplasm"/>
    <property type="evidence" value="ECO:0000250"/>
    <property type="project" value="UniProtKB"/>
</dbReference>
<dbReference type="GO" id="GO:0031410">
    <property type="term" value="C:cytoplasmic vesicle"/>
    <property type="evidence" value="ECO:0000250"/>
    <property type="project" value="UniProtKB"/>
</dbReference>
<dbReference type="GO" id="GO:0005829">
    <property type="term" value="C:cytosol"/>
    <property type="evidence" value="ECO:0000250"/>
    <property type="project" value="UniProtKB"/>
</dbReference>
<dbReference type="GO" id="GO:0032839">
    <property type="term" value="C:dendrite cytoplasm"/>
    <property type="evidence" value="ECO:0000250"/>
    <property type="project" value="UniProtKB"/>
</dbReference>
<dbReference type="GO" id="GO:0005739">
    <property type="term" value="C:mitochondrion"/>
    <property type="evidence" value="ECO:0000250"/>
    <property type="project" value="UniProtKB"/>
</dbReference>
<dbReference type="GO" id="GO:0043025">
    <property type="term" value="C:neuronal cell body"/>
    <property type="evidence" value="ECO:0000250"/>
    <property type="project" value="UniProtKB"/>
</dbReference>
<dbReference type="GO" id="GO:0005634">
    <property type="term" value="C:nucleus"/>
    <property type="evidence" value="ECO:0000250"/>
    <property type="project" value="UniProtKB"/>
</dbReference>
<dbReference type="GO" id="GO:0005777">
    <property type="term" value="C:peroxisome"/>
    <property type="evidence" value="ECO:0000318"/>
    <property type="project" value="GO_Central"/>
</dbReference>
<dbReference type="GO" id="GO:0032991">
    <property type="term" value="C:protein-containing complex"/>
    <property type="evidence" value="ECO:0000250"/>
    <property type="project" value="UniProtKB"/>
</dbReference>
<dbReference type="GO" id="GO:0005507">
    <property type="term" value="F:copper ion binding"/>
    <property type="evidence" value="ECO:0000250"/>
    <property type="project" value="UniProtKB"/>
</dbReference>
<dbReference type="GO" id="GO:0030346">
    <property type="term" value="F:protein phosphatase 2B binding"/>
    <property type="evidence" value="ECO:0000250"/>
    <property type="project" value="UniProtKB"/>
</dbReference>
<dbReference type="GO" id="GO:0051087">
    <property type="term" value="F:protein-folding chaperone binding"/>
    <property type="evidence" value="ECO:0000250"/>
    <property type="project" value="UniProtKB"/>
</dbReference>
<dbReference type="GO" id="GO:0004784">
    <property type="term" value="F:superoxide dismutase activity"/>
    <property type="evidence" value="ECO:0000250"/>
    <property type="project" value="UniProtKB"/>
</dbReference>
<dbReference type="GO" id="GO:0008270">
    <property type="term" value="F:zinc ion binding"/>
    <property type="evidence" value="ECO:0000250"/>
    <property type="project" value="UniProtKB"/>
</dbReference>
<dbReference type="GO" id="GO:0060088">
    <property type="term" value="P:auditory receptor cell stereocilium organization"/>
    <property type="evidence" value="ECO:0000250"/>
    <property type="project" value="UniProtKB"/>
</dbReference>
<dbReference type="GO" id="GO:0007566">
    <property type="term" value="P:embryo implantation"/>
    <property type="evidence" value="ECO:0000250"/>
    <property type="project" value="UniProtKB"/>
</dbReference>
<dbReference type="GO" id="GO:0006749">
    <property type="term" value="P:glutathione metabolic process"/>
    <property type="evidence" value="ECO:0000250"/>
    <property type="project" value="UniProtKB"/>
</dbReference>
<dbReference type="GO" id="GO:0060047">
    <property type="term" value="P:heart contraction"/>
    <property type="evidence" value="ECO:0000250"/>
    <property type="project" value="UniProtKB"/>
</dbReference>
<dbReference type="GO" id="GO:0050665">
    <property type="term" value="P:hydrogen peroxide biosynthetic process"/>
    <property type="evidence" value="ECO:0000250"/>
    <property type="project" value="UniProtKB"/>
</dbReference>
<dbReference type="GO" id="GO:0006879">
    <property type="term" value="P:intracellular iron ion homeostasis"/>
    <property type="evidence" value="ECO:0000250"/>
    <property type="project" value="UniProtKB"/>
</dbReference>
<dbReference type="GO" id="GO:0007626">
    <property type="term" value="P:locomotory behavior"/>
    <property type="evidence" value="ECO:0000250"/>
    <property type="project" value="UniProtKB"/>
</dbReference>
<dbReference type="GO" id="GO:0046716">
    <property type="term" value="P:muscle cell cellular homeostasis"/>
    <property type="evidence" value="ECO:0000250"/>
    <property type="project" value="UniProtKB"/>
</dbReference>
<dbReference type="GO" id="GO:0002262">
    <property type="term" value="P:myeloid cell homeostasis"/>
    <property type="evidence" value="ECO:0000250"/>
    <property type="project" value="UniProtKB"/>
</dbReference>
<dbReference type="GO" id="GO:0043524">
    <property type="term" value="P:negative regulation of neuron apoptotic process"/>
    <property type="evidence" value="ECO:0000250"/>
    <property type="project" value="UniProtKB"/>
</dbReference>
<dbReference type="GO" id="GO:0060052">
    <property type="term" value="P:neurofilament cytoskeleton organization"/>
    <property type="evidence" value="ECO:0000250"/>
    <property type="project" value="UniProtKB"/>
</dbReference>
<dbReference type="GO" id="GO:0001541">
    <property type="term" value="P:ovarian follicle development"/>
    <property type="evidence" value="ECO:0000250"/>
    <property type="project" value="UniProtKB"/>
</dbReference>
<dbReference type="GO" id="GO:0032287">
    <property type="term" value="P:peripheral nervous system myelin maintenance"/>
    <property type="evidence" value="ECO:0000250"/>
    <property type="project" value="UniProtKB"/>
</dbReference>
<dbReference type="GO" id="GO:0001819">
    <property type="term" value="P:positive regulation of cytokine production"/>
    <property type="evidence" value="ECO:0000250"/>
    <property type="project" value="UniProtKB"/>
</dbReference>
<dbReference type="GO" id="GO:0043410">
    <property type="term" value="P:positive regulation of MAPK cascade"/>
    <property type="evidence" value="ECO:0000250"/>
    <property type="project" value="UniProtKB"/>
</dbReference>
<dbReference type="GO" id="GO:0072593">
    <property type="term" value="P:reactive oxygen species metabolic process"/>
    <property type="evidence" value="ECO:0000250"/>
    <property type="project" value="UniProtKB"/>
</dbReference>
<dbReference type="GO" id="GO:0008217">
    <property type="term" value="P:regulation of blood pressure"/>
    <property type="evidence" value="ECO:0000250"/>
    <property type="project" value="UniProtKB"/>
</dbReference>
<dbReference type="GO" id="GO:0051881">
    <property type="term" value="P:regulation of mitochondrial membrane potential"/>
    <property type="evidence" value="ECO:0000250"/>
    <property type="project" value="UniProtKB"/>
</dbReference>
<dbReference type="GO" id="GO:0040014">
    <property type="term" value="P:regulation of multicellular organism growth"/>
    <property type="evidence" value="ECO:0000250"/>
    <property type="project" value="UniProtKB"/>
</dbReference>
<dbReference type="GO" id="GO:0060087">
    <property type="term" value="P:relaxation of vascular associated smooth muscle"/>
    <property type="evidence" value="ECO:0000250"/>
    <property type="project" value="UniProtKB"/>
</dbReference>
<dbReference type="GO" id="GO:0019430">
    <property type="term" value="P:removal of superoxide radicals"/>
    <property type="evidence" value="ECO:0000250"/>
    <property type="project" value="UniProtKB"/>
</dbReference>
<dbReference type="GO" id="GO:0048678">
    <property type="term" value="P:response to axon injury"/>
    <property type="evidence" value="ECO:0000250"/>
    <property type="project" value="UniProtKB"/>
</dbReference>
<dbReference type="GO" id="GO:0045471">
    <property type="term" value="P:response to ethanol"/>
    <property type="evidence" value="ECO:0000250"/>
    <property type="project" value="UniProtKB"/>
</dbReference>
<dbReference type="GO" id="GO:0009408">
    <property type="term" value="P:response to heat"/>
    <property type="evidence" value="ECO:0000250"/>
    <property type="project" value="UniProtKB"/>
</dbReference>
<dbReference type="GO" id="GO:0042542">
    <property type="term" value="P:response to hydrogen peroxide"/>
    <property type="evidence" value="ECO:0000250"/>
    <property type="project" value="UniProtKB"/>
</dbReference>
<dbReference type="GO" id="GO:0000303">
    <property type="term" value="P:response to superoxide"/>
    <property type="evidence" value="ECO:0000250"/>
    <property type="project" value="UniProtKB"/>
</dbReference>
<dbReference type="GO" id="GO:0001895">
    <property type="term" value="P:retina homeostasis"/>
    <property type="evidence" value="ECO:0000250"/>
    <property type="project" value="UniProtKB"/>
</dbReference>
<dbReference type="GO" id="GO:0007605">
    <property type="term" value="P:sensory perception of sound"/>
    <property type="evidence" value="ECO:0000250"/>
    <property type="project" value="UniProtKB"/>
</dbReference>
<dbReference type="GO" id="GO:0007283">
    <property type="term" value="P:spermatogenesis"/>
    <property type="evidence" value="ECO:0000250"/>
    <property type="project" value="UniProtKB"/>
</dbReference>
<dbReference type="GO" id="GO:0006801">
    <property type="term" value="P:superoxide metabolic process"/>
    <property type="evidence" value="ECO:0000250"/>
    <property type="project" value="UniProtKB"/>
</dbReference>
<dbReference type="GO" id="GO:0019226">
    <property type="term" value="P:transmission of nerve impulse"/>
    <property type="evidence" value="ECO:0000250"/>
    <property type="project" value="UniProtKB"/>
</dbReference>
<dbReference type="CDD" id="cd00305">
    <property type="entry name" value="Cu-Zn_Superoxide_Dismutase"/>
    <property type="match status" value="1"/>
</dbReference>
<dbReference type="FunFam" id="2.60.40.200:FF:000001">
    <property type="entry name" value="Superoxide dismutase [Cu-Zn]"/>
    <property type="match status" value="1"/>
</dbReference>
<dbReference type="Gene3D" id="2.60.40.200">
    <property type="entry name" value="Superoxide dismutase, copper/zinc binding domain"/>
    <property type="match status" value="1"/>
</dbReference>
<dbReference type="InterPro" id="IPR036423">
    <property type="entry name" value="SOD-like_Cu/Zn_dom_sf"/>
</dbReference>
<dbReference type="InterPro" id="IPR024134">
    <property type="entry name" value="SOD_Cu/Zn_/chaperone"/>
</dbReference>
<dbReference type="InterPro" id="IPR018152">
    <property type="entry name" value="SOD_Cu/Zn_BS"/>
</dbReference>
<dbReference type="InterPro" id="IPR001424">
    <property type="entry name" value="SOD_Cu_Zn_dom"/>
</dbReference>
<dbReference type="PANTHER" id="PTHR10003">
    <property type="entry name" value="SUPEROXIDE DISMUTASE CU-ZN -RELATED"/>
    <property type="match status" value="1"/>
</dbReference>
<dbReference type="Pfam" id="PF00080">
    <property type="entry name" value="Sod_Cu"/>
    <property type="match status" value="1"/>
</dbReference>
<dbReference type="PRINTS" id="PR00068">
    <property type="entry name" value="CUZNDISMTASE"/>
</dbReference>
<dbReference type="SUPFAM" id="SSF49329">
    <property type="entry name" value="Cu,Zn superoxide dismutase-like"/>
    <property type="match status" value="1"/>
</dbReference>
<dbReference type="PROSITE" id="PS00087">
    <property type="entry name" value="SOD_CU_ZN_1"/>
    <property type="match status" value="1"/>
</dbReference>
<dbReference type="PROSITE" id="PS00332">
    <property type="entry name" value="SOD_CU_ZN_2"/>
    <property type="match status" value="1"/>
</dbReference>
<sequence>MAMKAVCVLKGDSPVQGTINFEQKESNGPVKVWGSITGLTEGLHGFHVHQFGDNTQGCTSAGPHFNPLSRQHGGPKDEERHVGDLGNVTAGKDGVAKVSFEDSVISLSGDHSIIGRTLVVHEKADDLGKGGNEESKKTGNAGGRLACGVIGIAQ</sequence>